<dbReference type="EMBL" id="L77117">
    <property type="protein sequence ID" value="AAB98795.1"/>
    <property type="molecule type" value="Genomic_DNA"/>
</dbReference>
<dbReference type="PIR" id="H64399">
    <property type="entry name" value="H64399"/>
</dbReference>
<dbReference type="SMR" id="Q58210"/>
<dbReference type="STRING" id="243232.MJ_0800"/>
<dbReference type="PaxDb" id="243232-MJ_0800"/>
<dbReference type="EnsemblBacteria" id="AAB98795">
    <property type="protein sequence ID" value="AAB98795"/>
    <property type="gene ID" value="MJ_0800"/>
</dbReference>
<dbReference type="KEGG" id="mja:MJ_0800"/>
<dbReference type="eggNOG" id="arCOG02679">
    <property type="taxonomic scope" value="Archaea"/>
</dbReference>
<dbReference type="HOGENOM" id="CLU_666680_0_0_2"/>
<dbReference type="InParanoid" id="Q58210"/>
<dbReference type="PhylomeDB" id="Q58210"/>
<dbReference type="Proteomes" id="UP000000805">
    <property type="component" value="Chromosome"/>
</dbReference>
<dbReference type="GO" id="GO:0051539">
    <property type="term" value="F:4 iron, 4 sulfur cluster binding"/>
    <property type="evidence" value="ECO:0007669"/>
    <property type="project" value="UniProtKB-KW"/>
</dbReference>
<dbReference type="GO" id="GO:0046872">
    <property type="term" value="F:metal ion binding"/>
    <property type="evidence" value="ECO:0007669"/>
    <property type="project" value="UniProtKB-KW"/>
</dbReference>
<dbReference type="CDD" id="cd24108">
    <property type="entry name" value="ASKHA_NBD_MJ0800-like"/>
    <property type="match status" value="1"/>
</dbReference>
<dbReference type="Gene3D" id="3.30.420.40">
    <property type="match status" value="2"/>
</dbReference>
<dbReference type="InterPro" id="IPR002731">
    <property type="entry name" value="ATPase_BadF"/>
</dbReference>
<dbReference type="InterPro" id="IPR043129">
    <property type="entry name" value="ATPase_NBD"/>
</dbReference>
<dbReference type="InterPro" id="IPR008275">
    <property type="entry name" value="CoA_E_activase_dom"/>
</dbReference>
<dbReference type="InterPro" id="IPR051805">
    <property type="entry name" value="Dehydratase_Activator_Redct"/>
</dbReference>
<dbReference type="InterPro" id="IPR017676">
    <property type="entry name" value="Methan_mark_15"/>
</dbReference>
<dbReference type="NCBIfam" id="TIGR00241">
    <property type="entry name" value="CoA_E_activ"/>
    <property type="match status" value="1"/>
</dbReference>
<dbReference type="NCBIfam" id="TIGR03286">
    <property type="entry name" value="methan_mark_15"/>
    <property type="match status" value="1"/>
</dbReference>
<dbReference type="PANTHER" id="PTHR32329:SF2">
    <property type="entry name" value="BIFUNCTIONAL PROTEIN [INCLUDES 2-HYDROXYACYL-COA DEHYDRATASE (N-TER) AND ITS ACTIVATOR DOMAIN (C_TERM)"/>
    <property type="match status" value="1"/>
</dbReference>
<dbReference type="PANTHER" id="PTHR32329">
    <property type="entry name" value="BIFUNCTIONAL PROTEIN [INCLUDES 2-HYDROXYACYL-COA DEHYDRATASE (N-TER) AND ITS ACTIVATOR DOMAIN (C_TERM)-RELATED"/>
    <property type="match status" value="1"/>
</dbReference>
<dbReference type="Pfam" id="PF01869">
    <property type="entry name" value="BcrAD_BadFG"/>
    <property type="match status" value="1"/>
</dbReference>
<dbReference type="SUPFAM" id="SSF53067">
    <property type="entry name" value="Actin-like ATPase domain"/>
    <property type="match status" value="1"/>
</dbReference>
<sequence>MKLMVKIALLTCGAEWSGVYHEIEKAAQKVGGELIFPEVDLSYIDEVEDRLGFKVGSANLKLMFARAMSIIEGNTDAEAVFIATCFRCAEGALVRNEVRKLIQQNTNLPVVMYSFTERTKASELLTRMEALTTIVERKSLLARKKQEGISLGIDSGSTTTKAVVMIDDEVAGTGWIYTKDVIESAKEAVNNALKEAGISLDQVETIGTTGYGRYTVGEYFKADLIQEELTVNSKGAAYLADKQEGEATVIDIGGMDNKAISLYDAIPDGFTMGGICAGASGRFFEITARRLGVSLQELGELAAKGDWRKIKMNSYCIVFGIQDLVTALAEGAKAEDVAAAAAHSVAEQVFEQQLQEVDVRDPVILVGGSSLLKGLVIAMEEVLGRKIIVPRYSQLIGAVGAALLSSGYRYKKMKA</sequence>
<accession>Q58210</accession>
<proteinExistence type="predicted"/>
<gene>
    <name type="ordered locus">MJ0800</name>
</gene>
<organism>
    <name type="scientific">Methanocaldococcus jannaschii (strain ATCC 43067 / DSM 2661 / JAL-1 / JCM 10045 / NBRC 100440)</name>
    <name type="common">Methanococcus jannaschii</name>
    <dbReference type="NCBI Taxonomy" id="243232"/>
    <lineage>
        <taxon>Archaea</taxon>
        <taxon>Methanobacteriati</taxon>
        <taxon>Methanobacteriota</taxon>
        <taxon>Methanomada group</taxon>
        <taxon>Methanococci</taxon>
        <taxon>Methanococcales</taxon>
        <taxon>Methanocaldococcaceae</taxon>
        <taxon>Methanocaldococcus</taxon>
    </lineage>
</organism>
<protein>
    <recommendedName>
        <fullName>Uncharacterized protein MJ0800</fullName>
    </recommendedName>
</protein>
<name>Y800_METJA</name>
<comment type="cofactor">
    <cofactor evidence="2">
        <name>[4Fe-4S] cluster</name>
        <dbReference type="ChEBI" id="CHEBI:49883"/>
    </cofactor>
    <text evidence="2">Binds 1 [4Fe-4S] cluster per dimer.</text>
</comment>
<comment type="subunit">
    <text evidence="2">Homodimer.</text>
</comment>
<feature type="chain" id="PRO_0000107051" description="Uncharacterized protein MJ0800">
    <location>
        <begin position="1"/>
        <end position="415"/>
    </location>
</feature>
<feature type="binding site" evidence="1">
    <location>
        <position position="276"/>
    </location>
    <ligand>
        <name>[4Fe-4S] cluster</name>
        <dbReference type="ChEBI" id="CHEBI:49883"/>
        <note>ligand shared between dimeric partners</note>
    </ligand>
</feature>
<feature type="binding site" evidence="1">
    <location>
        <position position="316"/>
    </location>
    <ligand>
        <name>[4Fe-4S] cluster</name>
        <dbReference type="ChEBI" id="CHEBI:49883"/>
        <note>ligand shared between dimeric partners</note>
    </ligand>
</feature>
<evidence type="ECO:0000255" key="1"/>
<evidence type="ECO:0000305" key="2"/>
<reference key="1">
    <citation type="journal article" date="1996" name="Science">
        <title>Complete genome sequence of the methanogenic archaeon, Methanococcus jannaschii.</title>
        <authorList>
            <person name="Bult C.J."/>
            <person name="White O."/>
            <person name="Olsen G.J."/>
            <person name="Zhou L."/>
            <person name="Fleischmann R.D."/>
            <person name="Sutton G.G."/>
            <person name="Blake J.A."/>
            <person name="FitzGerald L.M."/>
            <person name="Clayton R.A."/>
            <person name="Gocayne J.D."/>
            <person name="Kerlavage A.R."/>
            <person name="Dougherty B.A."/>
            <person name="Tomb J.-F."/>
            <person name="Adams M.D."/>
            <person name="Reich C.I."/>
            <person name="Overbeek R."/>
            <person name="Kirkness E.F."/>
            <person name="Weinstock K.G."/>
            <person name="Merrick J.M."/>
            <person name="Glodek A."/>
            <person name="Scott J.L."/>
            <person name="Geoghagen N.S.M."/>
            <person name="Weidman J.F."/>
            <person name="Fuhrmann J.L."/>
            <person name="Nguyen D."/>
            <person name="Utterback T.R."/>
            <person name="Kelley J.M."/>
            <person name="Peterson J.D."/>
            <person name="Sadow P.W."/>
            <person name="Hanna M.C."/>
            <person name="Cotton M.D."/>
            <person name="Roberts K.M."/>
            <person name="Hurst M.A."/>
            <person name="Kaine B.P."/>
            <person name="Borodovsky M."/>
            <person name="Klenk H.-P."/>
            <person name="Fraser C.M."/>
            <person name="Smith H.O."/>
            <person name="Woese C.R."/>
            <person name="Venter J.C."/>
        </authorList>
    </citation>
    <scope>NUCLEOTIDE SEQUENCE [LARGE SCALE GENOMIC DNA]</scope>
    <source>
        <strain>ATCC 43067 / DSM 2661 / JAL-1 / JCM 10045 / NBRC 100440</strain>
    </source>
</reference>
<keyword id="KW-0004">4Fe-4S</keyword>
<keyword id="KW-0408">Iron</keyword>
<keyword id="KW-0411">Iron-sulfur</keyword>
<keyword id="KW-0479">Metal-binding</keyword>
<keyword id="KW-1185">Reference proteome</keyword>